<name>RL24_CHLSY</name>
<dbReference type="EMBL" id="CP001364">
    <property type="protein sequence ID" value="ACM53959.1"/>
    <property type="molecule type" value="Genomic_DNA"/>
</dbReference>
<dbReference type="SMR" id="B9LJE3"/>
<dbReference type="KEGG" id="chl:Chy400_2567"/>
<dbReference type="HOGENOM" id="CLU_093315_2_0_0"/>
<dbReference type="OrthoDB" id="9807419at2"/>
<dbReference type="GO" id="GO:1990904">
    <property type="term" value="C:ribonucleoprotein complex"/>
    <property type="evidence" value="ECO:0007669"/>
    <property type="project" value="UniProtKB-KW"/>
</dbReference>
<dbReference type="GO" id="GO:0005840">
    <property type="term" value="C:ribosome"/>
    <property type="evidence" value="ECO:0007669"/>
    <property type="project" value="UniProtKB-KW"/>
</dbReference>
<dbReference type="GO" id="GO:0019843">
    <property type="term" value="F:rRNA binding"/>
    <property type="evidence" value="ECO:0007669"/>
    <property type="project" value="UniProtKB-UniRule"/>
</dbReference>
<dbReference type="GO" id="GO:0003735">
    <property type="term" value="F:structural constituent of ribosome"/>
    <property type="evidence" value="ECO:0007669"/>
    <property type="project" value="InterPro"/>
</dbReference>
<dbReference type="GO" id="GO:0006412">
    <property type="term" value="P:translation"/>
    <property type="evidence" value="ECO:0007669"/>
    <property type="project" value="UniProtKB-UniRule"/>
</dbReference>
<dbReference type="CDD" id="cd06089">
    <property type="entry name" value="KOW_RPL26"/>
    <property type="match status" value="1"/>
</dbReference>
<dbReference type="FunFam" id="2.30.30.30:FF:000051">
    <property type="entry name" value="50S ribosomal protein L24"/>
    <property type="match status" value="1"/>
</dbReference>
<dbReference type="Gene3D" id="2.30.30.30">
    <property type="match status" value="1"/>
</dbReference>
<dbReference type="HAMAP" id="MF_01326_B">
    <property type="entry name" value="Ribosomal_uL24_B"/>
    <property type="match status" value="1"/>
</dbReference>
<dbReference type="InterPro" id="IPR005824">
    <property type="entry name" value="KOW"/>
</dbReference>
<dbReference type="InterPro" id="IPR014722">
    <property type="entry name" value="Rib_uL2_dom2"/>
</dbReference>
<dbReference type="InterPro" id="IPR003256">
    <property type="entry name" value="Ribosomal_uL24"/>
</dbReference>
<dbReference type="InterPro" id="IPR005825">
    <property type="entry name" value="Ribosomal_uL24_CS"/>
</dbReference>
<dbReference type="InterPro" id="IPR041988">
    <property type="entry name" value="Ribosomal_uL24_KOW"/>
</dbReference>
<dbReference type="InterPro" id="IPR008991">
    <property type="entry name" value="Translation_prot_SH3-like_sf"/>
</dbReference>
<dbReference type="NCBIfam" id="TIGR01079">
    <property type="entry name" value="rplX_bact"/>
    <property type="match status" value="1"/>
</dbReference>
<dbReference type="PANTHER" id="PTHR12903">
    <property type="entry name" value="MITOCHONDRIAL RIBOSOMAL PROTEIN L24"/>
    <property type="match status" value="1"/>
</dbReference>
<dbReference type="Pfam" id="PF00467">
    <property type="entry name" value="KOW"/>
    <property type="match status" value="1"/>
</dbReference>
<dbReference type="Pfam" id="PF17136">
    <property type="entry name" value="ribosomal_L24"/>
    <property type="match status" value="1"/>
</dbReference>
<dbReference type="SMART" id="SM00739">
    <property type="entry name" value="KOW"/>
    <property type="match status" value="1"/>
</dbReference>
<dbReference type="SUPFAM" id="SSF50104">
    <property type="entry name" value="Translation proteins SH3-like domain"/>
    <property type="match status" value="1"/>
</dbReference>
<dbReference type="PROSITE" id="PS01108">
    <property type="entry name" value="RIBOSOMAL_L24"/>
    <property type="match status" value="1"/>
</dbReference>
<keyword id="KW-0687">Ribonucleoprotein</keyword>
<keyword id="KW-0689">Ribosomal protein</keyword>
<keyword id="KW-0694">RNA-binding</keyword>
<keyword id="KW-0699">rRNA-binding</keyword>
<sequence>MHVKTGDEVLVIAGKDKGRRGKIKRALPAVNRVVVEGINIVKRHQKPRGPGRPGGIIEMEAPLHASNVMLICPSCGRASRTGKRFLEETDHKGRPRKVRYCKACDAVIDK</sequence>
<comment type="function">
    <text evidence="1">One of two assembly initiator proteins, it binds directly to the 5'-end of the 23S rRNA, where it nucleates assembly of the 50S subunit.</text>
</comment>
<comment type="function">
    <text evidence="1">One of the proteins that surrounds the polypeptide exit tunnel on the outside of the subunit.</text>
</comment>
<comment type="subunit">
    <text evidence="1">Part of the 50S ribosomal subunit.</text>
</comment>
<comment type="similarity">
    <text evidence="1">Belongs to the universal ribosomal protein uL24 family.</text>
</comment>
<accession>B9LJE3</accession>
<gene>
    <name evidence="1" type="primary">rplX</name>
    <name type="ordered locus">Chy400_2567</name>
</gene>
<reference key="1">
    <citation type="submission" date="2009-01" db="EMBL/GenBank/DDBJ databases">
        <title>Complete sequence of Chloroflexus sp. Y-400-fl.</title>
        <authorList>
            <consortium name="US DOE Joint Genome Institute"/>
            <person name="Lucas S."/>
            <person name="Copeland A."/>
            <person name="Lapidus A."/>
            <person name="Glavina del Rio T."/>
            <person name="Dalin E."/>
            <person name="Tice H."/>
            <person name="Bruce D."/>
            <person name="Goodwin L."/>
            <person name="Pitluck S."/>
            <person name="Sims D."/>
            <person name="Kiss H."/>
            <person name="Brettin T."/>
            <person name="Detter J.C."/>
            <person name="Han C."/>
            <person name="Larimer F."/>
            <person name="Land M."/>
            <person name="Hauser L."/>
            <person name="Kyrpides N."/>
            <person name="Ovchinnikova G."/>
            <person name="Bryant D.A."/>
            <person name="Richardson P."/>
        </authorList>
    </citation>
    <scope>NUCLEOTIDE SEQUENCE [LARGE SCALE GENOMIC DNA]</scope>
    <source>
        <strain>ATCC 29364 / DSM 637 / Y-400-fl</strain>
    </source>
</reference>
<evidence type="ECO:0000255" key="1">
    <source>
        <dbReference type="HAMAP-Rule" id="MF_01326"/>
    </source>
</evidence>
<evidence type="ECO:0000305" key="2"/>
<proteinExistence type="inferred from homology"/>
<feature type="chain" id="PRO_1000165936" description="Large ribosomal subunit protein uL24">
    <location>
        <begin position="1"/>
        <end position="110"/>
    </location>
</feature>
<protein>
    <recommendedName>
        <fullName evidence="1">Large ribosomal subunit protein uL24</fullName>
    </recommendedName>
    <alternativeName>
        <fullName evidence="2">50S ribosomal protein L24</fullName>
    </alternativeName>
</protein>
<organism>
    <name type="scientific">Chloroflexus aurantiacus (strain ATCC 29364 / DSM 637 / Y-400-fl)</name>
    <dbReference type="NCBI Taxonomy" id="480224"/>
    <lineage>
        <taxon>Bacteria</taxon>
        <taxon>Bacillati</taxon>
        <taxon>Chloroflexota</taxon>
        <taxon>Chloroflexia</taxon>
        <taxon>Chloroflexales</taxon>
        <taxon>Chloroflexineae</taxon>
        <taxon>Chloroflexaceae</taxon>
        <taxon>Chloroflexus</taxon>
    </lineage>
</organism>